<name>YCF3_PARMW</name>
<sequence>MPRSNRNDNFIDKSFTVMADLIVKLLPINARSKEAYVYYRDGLSAQNDGDYAEALENYDEALKLEDNPTDRGETLKNMAIIYMSNGEEERAIETYRRALDENSNQPSCLKNMGLIFEKWGRIAEEDGRQDDADRWFDQAAEAWTQAVRLNPGGYLDIENWLKSTGRSNVDVYF</sequence>
<protein>
    <recommendedName>
        <fullName evidence="1">Photosystem I assembly protein Ycf3</fullName>
    </recommendedName>
</protein>
<accession>Q7U435</accession>
<organism>
    <name type="scientific">Parasynechococcus marenigrum (strain WH8102)</name>
    <dbReference type="NCBI Taxonomy" id="84588"/>
    <lineage>
        <taxon>Bacteria</taxon>
        <taxon>Bacillati</taxon>
        <taxon>Cyanobacteriota</taxon>
        <taxon>Cyanophyceae</taxon>
        <taxon>Synechococcales</taxon>
        <taxon>Prochlorococcaceae</taxon>
        <taxon>Parasynechococcus</taxon>
        <taxon>Parasynechococcus marenigrum</taxon>
    </lineage>
</organism>
<keyword id="KW-0472">Membrane</keyword>
<keyword id="KW-0602">Photosynthesis</keyword>
<keyword id="KW-0677">Repeat</keyword>
<keyword id="KW-0793">Thylakoid</keyword>
<keyword id="KW-0802">TPR repeat</keyword>
<dbReference type="EMBL" id="BX569695">
    <property type="protein sequence ID" value="CAE08755.1"/>
    <property type="molecule type" value="Genomic_DNA"/>
</dbReference>
<dbReference type="RefSeq" id="WP_011129093.1">
    <property type="nucleotide sequence ID" value="NC_005070.1"/>
</dbReference>
<dbReference type="SMR" id="Q7U435"/>
<dbReference type="STRING" id="84588.SYNW2240"/>
<dbReference type="KEGG" id="syw:SYNW2240"/>
<dbReference type="eggNOG" id="COG3063">
    <property type="taxonomic scope" value="Bacteria"/>
</dbReference>
<dbReference type="HOGENOM" id="CLU_141248_0_0_3"/>
<dbReference type="Proteomes" id="UP000001422">
    <property type="component" value="Chromosome"/>
</dbReference>
<dbReference type="GO" id="GO:0031676">
    <property type="term" value="C:plasma membrane-derived thylakoid membrane"/>
    <property type="evidence" value="ECO:0007669"/>
    <property type="project" value="UniProtKB-SubCell"/>
</dbReference>
<dbReference type="GO" id="GO:0015979">
    <property type="term" value="P:photosynthesis"/>
    <property type="evidence" value="ECO:0007669"/>
    <property type="project" value="UniProtKB-UniRule"/>
</dbReference>
<dbReference type="Gene3D" id="1.25.40.10">
    <property type="entry name" value="Tetratricopeptide repeat domain"/>
    <property type="match status" value="1"/>
</dbReference>
<dbReference type="HAMAP" id="MF_00439">
    <property type="entry name" value="Ycf3"/>
    <property type="match status" value="1"/>
</dbReference>
<dbReference type="InterPro" id="IPR022818">
    <property type="entry name" value="PSI_Ycf3_assembly"/>
</dbReference>
<dbReference type="InterPro" id="IPR011990">
    <property type="entry name" value="TPR-like_helical_dom_sf"/>
</dbReference>
<dbReference type="InterPro" id="IPR019734">
    <property type="entry name" value="TPR_rpt"/>
</dbReference>
<dbReference type="InterPro" id="IPR051685">
    <property type="entry name" value="Ycf3/AcsC/BcsC/TPR_MFPF"/>
</dbReference>
<dbReference type="NCBIfam" id="NF002725">
    <property type="entry name" value="PRK02603.1"/>
    <property type="match status" value="1"/>
</dbReference>
<dbReference type="PANTHER" id="PTHR44943">
    <property type="entry name" value="CELLULOSE SYNTHASE OPERON PROTEIN C"/>
    <property type="match status" value="1"/>
</dbReference>
<dbReference type="PANTHER" id="PTHR44943:SF8">
    <property type="entry name" value="TPR REPEAT-CONTAINING PROTEIN MJ0263"/>
    <property type="match status" value="1"/>
</dbReference>
<dbReference type="Pfam" id="PF13424">
    <property type="entry name" value="TPR_12"/>
    <property type="match status" value="1"/>
</dbReference>
<dbReference type="SMART" id="SM00028">
    <property type="entry name" value="TPR"/>
    <property type="match status" value="3"/>
</dbReference>
<dbReference type="SUPFAM" id="SSF48452">
    <property type="entry name" value="TPR-like"/>
    <property type="match status" value="1"/>
</dbReference>
<dbReference type="PROSITE" id="PS50005">
    <property type="entry name" value="TPR"/>
    <property type="match status" value="3"/>
</dbReference>
<dbReference type="PROSITE" id="PS50293">
    <property type="entry name" value="TPR_REGION"/>
    <property type="match status" value="1"/>
</dbReference>
<proteinExistence type="inferred from homology"/>
<comment type="function">
    <text evidence="1">Essential for the assembly of the photosystem I (PSI) complex. May act as a chaperone-like factor to guide the assembly of the PSI subunits.</text>
</comment>
<comment type="subcellular location">
    <subcellularLocation>
        <location evidence="1">Cellular thylakoid membrane</location>
        <topology evidence="1">Peripheral membrane protein</topology>
    </subcellularLocation>
</comment>
<comment type="similarity">
    <text evidence="1">Belongs to the Ycf3 family.</text>
</comment>
<feature type="chain" id="PRO_0000217833" description="Photosystem I assembly protein Ycf3">
    <location>
        <begin position="1"/>
        <end position="173"/>
    </location>
</feature>
<feature type="repeat" description="TPR 1">
    <location>
        <begin position="35"/>
        <end position="68"/>
    </location>
</feature>
<feature type="repeat" description="TPR 2">
    <location>
        <begin position="72"/>
        <end position="105"/>
    </location>
</feature>
<feature type="repeat" description="TPR 3">
    <location>
        <begin position="120"/>
        <end position="153"/>
    </location>
</feature>
<reference key="1">
    <citation type="journal article" date="2003" name="Nature">
        <title>The genome of a motile marine Synechococcus.</title>
        <authorList>
            <person name="Palenik B."/>
            <person name="Brahamsha B."/>
            <person name="Larimer F.W."/>
            <person name="Land M.L."/>
            <person name="Hauser L."/>
            <person name="Chain P."/>
            <person name="Lamerdin J.E."/>
            <person name="Regala W."/>
            <person name="Allen E.E."/>
            <person name="McCarren J."/>
            <person name="Paulsen I.T."/>
            <person name="Dufresne A."/>
            <person name="Partensky F."/>
            <person name="Webb E.A."/>
            <person name="Waterbury J."/>
        </authorList>
    </citation>
    <scope>NUCLEOTIDE SEQUENCE [LARGE SCALE GENOMIC DNA]</scope>
    <source>
        <strain>WH8102</strain>
    </source>
</reference>
<evidence type="ECO:0000255" key="1">
    <source>
        <dbReference type="HAMAP-Rule" id="MF_00439"/>
    </source>
</evidence>
<gene>
    <name evidence="1" type="primary">ycf3</name>
    <name type="ordered locus">SYNW2240</name>
</gene>